<dbReference type="EC" id="3.1.11.6" evidence="1"/>
<dbReference type="EMBL" id="CP000611">
    <property type="protein sequence ID" value="ABQ72855.1"/>
    <property type="molecule type" value="Genomic_DNA"/>
</dbReference>
<dbReference type="RefSeq" id="WP_003405846.1">
    <property type="nucleotide sequence ID" value="NZ_CP016972.1"/>
</dbReference>
<dbReference type="SMR" id="A5U1F5"/>
<dbReference type="GeneID" id="45425082"/>
<dbReference type="KEGG" id="mra:MRA_1119"/>
<dbReference type="eggNOG" id="COG1570">
    <property type="taxonomic scope" value="Bacteria"/>
</dbReference>
<dbReference type="HOGENOM" id="CLU_023625_2_1_11"/>
<dbReference type="Proteomes" id="UP000001988">
    <property type="component" value="Chromosome"/>
</dbReference>
<dbReference type="GO" id="GO:0005737">
    <property type="term" value="C:cytoplasm"/>
    <property type="evidence" value="ECO:0007669"/>
    <property type="project" value="UniProtKB-SubCell"/>
</dbReference>
<dbReference type="GO" id="GO:0009318">
    <property type="term" value="C:exodeoxyribonuclease VII complex"/>
    <property type="evidence" value="ECO:0007669"/>
    <property type="project" value="InterPro"/>
</dbReference>
<dbReference type="GO" id="GO:0008855">
    <property type="term" value="F:exodeoxyribonuclease VII activity"/>
    <property type="evidence" value="ECO:0007669"/>
    <property type="project" value="UniProtKB-UniRule"/>
</dbReference>
<dbReference type="GO" id="GO:0003676">
    <property type="term" value="F:nucleic acid binding"/>
    <property type="evidence" value="ECO:0007669"/>
    <property type="project" value="InterPro"/>
</dbReference>
<dbReference type="GO" id="GO:0006308">
    <property type="term" value="P:DNA catabolic process"/>
    <property type="evidence" value="ECO:0007669"/>
    <property type="project" value="UniProtKB-UniRule"/>
</dbReference>
<dbReference type="CDD" id="cd04489">
    <property type="entry name" value="ExoVII_LU_OBF"/>
    <property type="match status" value="1"/>
</dbReference>
<dbReference type="HAMAP" id="MF_00378">
    <property type="entry name" value="Exonuc_7_L"/>
    <property type="match status" value="1"/>
</dbReference>
<dbReference type="InterPro" id="IPR003753">
    <property type="entry name" value="Exonuc_VII_L"/>
</dbReference>
<dbReference type="InterPro" id="IPR020579">
    <property type="entry name" value="Exonuc_VII_lsu_C"/>
</dbReference>
<dbReference type="InterPro" id="IPR025824">
    <property type="entry name" value="OB-fold_nuc-bd_dom"/>
</dbReference>
<dbReference type="NCBIfam" id="TIGR00237">
    <property type="entry name" value="xseA"/>
    <property type="match status" value="1"/>
</dbReference>
<dbReference type="PANTHER" id="PTHR30008">
    <property type="entry name" value="EXODEOXYRIBONUCLEASE 7 LARGE SUBUNIT"/>
    <property type="match status" value="1"/>
</dbReference>
<dbReference type="PANTHER" id="PTHR30008:SF0">
    <property type="entry name" value="EXODEOXYRIBONUCLEASE 7 LARGE SUBUNIT"/>
    <property type="match status" value="1"/>
</dbReference>
<dbReference type="Pfam" id="PF02601">
    <property type="entry name" value="Exonuc_VII_L"/>
    <property type="match status" value="1"/>
</dbReference>
<dbReference type="Pfam" id="PF13742">
    <property type="entry name" value="tRNA_anti_2"/>
    <property type="match status" value="1"/>
</dbReference>
<comment type="function">
    <text evidence="1">Bidirectionally degrades single-stranded DNA into large acid-insoluble oligonucleotides, which are then degraded further into small acid-soluble oligonucleotides.</text>
</comment>
<comment type="catalytic activity">
    <reaction evidence="1">
        <text>Exonucleolytic cleavage in either 5'- to 3'- or 3'- to 5'-direction to yield nucleoside 5'-phosphates.</text>
        <dbReference type="EC" id="3.1.11.6"/>
    </reaction>
</comment>
<comment type="subunit">
    <text evidence="1">Heterooligomer composed of large and small subunits.</text>
</comment>
<comment type="subcellular location">
    <subcellularLocation>
        <location evidence="1">Cytoplasm</location>
    </subcellularLocation>
</comment>
<comment type="similarity">
    <text evidence="1">Belongs to the XseA family.</text>
</comment>
<keyword id="KW-0963">Cytoplasm</keyword>
<keyword id="KW-0269">Exonuclease</keyword>
<keyword id="KW-0378">Hydrolase</keyword>
<keyword id="KW-0540">Nuclease</keyword>
<keyword id="KW-1185">Reference proteome</keyword>
<organism>
    <name type="scientific">Mycobacterium tuberculosis (strain ATCC 25177 / H37Ra)</name>
    <dbReference type="NCBI Taxonomy" id="419947"/>
    <lineage>
        <taxon>Bacteria</taxon>
        <taxon>Bacillati</taxon>
        <taxon>Actinomycetota</taxon>
        <taxon>Actinomycetes</taxon>
        <taxon>Mycobacteriales</taxon>
        <taxon>Mycobacteriaceae</taxon>
        <taxon>Mycobacterium</taxon>
        <taxon>Mycobacterium tuberculosis complex</taxon>
    </lineage>
</organism>
<feature type="chain" id="PRO_0000303804" description="Exodeoxyribonuclease 7 large subunit">
    <location>
        <begin position="1"/>
        <end position="415"/>
    </location>
</feature>
<gene>
    <name evidence="1" type="primary">xseA</name>
    <name type="ordered locus">MRA_1119</name>
</gene>
<proteinExistence type="inferred from homology"/>
<evidence type="ECO:0000255" key="1">
    <source>
        <dbReference type="HAMAP-Rule" id="MF_00378"/>
    </source>
</evidence>
<reference key="1">
    <citation type="journal article" date="2008" name="PLoS ONE">
        <title>Genetic basis of virulence attenuation revealed by comparative genomic analysis of Mycobacterium tuberculosis strain H37Ra versus H37Rv.</title>
        <authorList>
            <person name="Zheng H."/>
            <person name="Lu L."/>
            <person name="Wang B."/>
            <person name="Pu S."/>
            <person name="Zhang X."/>
            <person name="Zhu G."/>
            <person name="Shi W."/>
            <person name="Zhang L."/>
            <person name="Wang H."/>
            <person name="Wang S."/>
            <person name="Zhao G."/>
            <person name="Zhang Y."/>
        </authorList>
    </citation>
    <scope>NUCLEOTIDE SEQUENCE [LARGE SCALE GENOMIC DNA]</scope>
    <source>
        <strain>ATCC 25177 / H37Ra</strain>
    </source>
</reference>
<accession>A5U1F5</accession>
<name>EX7L_MYCTA</name>
<sequence>MTQNSAENPFPVRAVAIRVAGWIDKLGAVWVEGQLAQITMRPDAKTVFMVLRDPAADMSLTVTCSRDLVLSAPVKLAEGVQVVVCGKPSFYTGRGTFSLRLSEIRAVGIGELLARIDRLRRLLDAEGLFDPRLKRPIPYLPNMIGLITGRASAAERDVTTVASARWPAARFAVRNVAVQGPNAVGQIVEALRELDRDPDVDVIVLARGGGSVEDLLPFSDETLCRAIAACRTPVVSAVGHEPDNPLCDLVVDLRAATPTDAAKKVVPDTAAEQRLIDDLRRRSAQALRNWVSREQRAVAQLRSRPVLADPMTMVSVRAEEVHRARSTLRRNLTLMVAAETERIGHLAARLATLGPAATLARGYAIVQTVAQTGPEGGSEPQVLRSVHDAPEGTKLRVRVADGALAAVSEGQTNGL</sequence>
<protein>
    <recommendedName>
        <fullName evidence="1">Exodeoxyribonuclease 7 large subunit</fullName>
        <ecNumber evidence="1">3.1.11.6</ecNumber>
    </recommendedName>
    <alternativeName>
        <fullName evidence="1">Exodeoxyribonuclease VII large subunit</fullName>
        <shortName evidence="1">Exonuclease VII large subunit</shortName>
    </alternativeName>
</protein>